<feature type="chain" id="PRO_0000330966" description="Glutamate--tRNA ligase">
    <location>
        <begin position="1"/>
        <end position="517"/>
    </location>
</feature>
<feature type="short sequence motif" description="'HIGH' region" evidence="1">
    <location>
        <begin position="14"/>
        <end position="24"/>
    </location>
</feature>
<feature type="short sequence motif" description="'KMSKS' region" evidence="1">
    <location>
        <begin position="266"/>
        <end position="270"/>
    </location>
</feature>
<feature type="binding site" evidence="1">
    <location>
        <position position="269"/>
    </location>
    <ligand>
        <name>ATP</name>
        <dbReference type="ChEBI" id="CHEBI:30616"/>
    </ligand>
</feature>
<reference key="1">
    <citation type="journal article" date="2007" name="Appl. Environ. Microbiol.">
        <title>Genome sequence of the cellulolytic gliding bacterium Cytophaga hutchinsonii.</title>
        <authorList>
            <person name="Xie G."/>
            <person name="Bruce D.C."/>
            <person name="Challacombe J.F."/>
            <person name="Chertkov O."/>
            <person name="Detter J.C."/>
            <person name="Gilna P."/>
            <person name="Han C.S."/>
            <person name="Lucas S."/>
            <person name="Misra M."/>
            <person name="Myers G.L."/>
            <person name="Richardson P."/>
            <person name="Tapia R."/>
            <person name="Thayer N."/>
            <person name="Thompson L.S."/>
            <person name="Brettin T.S."/>
            <person name="Henrissat B."/>
            <person name="Wilson D.B."/>
            <person name="McBride M.J."/>
        </authorList>
    </citation>
    <scope>NUCLEOTIDE SEQUENCE [LARGE SCALE GENOMIC DNA]</scope>
    <source>
        <strain>ATCC 33406 / DSM 1761 / JCM 20678 / CIP 103989 / IAM 12607 / NBRC 15051 / NCIMB 9469 / D465</strain>
    </source>
</reference>
<proteinExistence type="inferred from homology"/>
<dbReference type="EC" id="6.1.1.17" evidence="1"/>
<dbReference type="EMBL" id="CP000383">
    <property type="protein sequence ID" value="ABG60609.1"/>
    <property type="molecule type" value="Genomic_DNA"/>
</dbReference>
<dbReference type="RefSeq" id="WP_011586717.1">
    <property type="nucleotide sequence ID" value="NC_008255.1"/>
</dbReference>
<dbReference type="SMR" id="Q11PQ4"/>
<dbReference type="STRING" id="269798.CHU_3373"/>
<dbReference type="KEGG" id="chu:CHU_3373"/>
<dbReference type="eggNOG" id="COG0008">
    <property type="taxonomic scope" value="Bacteria"/>
</dbReference>
<dbReference type="eggNOG" id="COG1384">
    <property type="taxonomic scope" value="Bacteria"/>
</dbReference>
<dbReference type="HOGENOM" id="CLU_015768_6_3_10"/>
<dbReference type="OrthoDB" id="9807503at2"/>
<dbReference type="Proteomes" id="UP000001822">
    <property type="component" value="Chromosome"/>
</dbReference>
<dbReference type="GO" id="GO:0005829">
    <property type="term" value="C:cytosol"/>
    <property type="evidence" value="ECO:0007669"/>
    <property type="project" value="TreeGrafter"/>
</dbReference>
<dbReference type="GO" id="GO:0005524">
    <property type="term" value="F:ATP binding"/>
    <property type="evidence" value="ECO:0007669"/>
    <property type="project" value="UniProtKB-UniRule"/>
</dbReference>
<dbReference type="GO" id="GO:0004818">
    <property type="term" value="F:glutamate-tRNA ligase activity"/>
    <property type="evidence" value="ECO:0007669"/>
    <property type="project" value="UniProtKB-UniRule"/>
</dbReference>
<dbReference type="GO" id="GO:0000049">
    <property type="term" value="F:tRNA binding"/>
    <property type="evidence" value="ECO:0007669"/>
    <property type="project" value="InterPro"/>
</dbReference>
<dbReference type="GO" id="GO:0008270">
    <property type="term" value="F:zinc ion binding"/>
    <property type="evidence" value="ECO:0007669"/>
    <property type="project" value="InterPro"/>
</dbReference>
<dbReference type="GO" id="GO:0006424">
    <property type="term" value="P:glutamyl-tRNA aminoacylation"/>
    <property type="evidence" value="ECO:0007669"/>
    <property type="project" value="UniProtKB-UniRule"/>
</dbReference>
<dbReference type="CDD" id="cd00808">
    <property type="entry name" value="GluRS_core"/>
    <property type="match status" value="1"/>
</dbReference>
<dbReference type="FunFam" id="3.40.50.620:FF:000127">
    <property type="entry name" value="Glutamate--tRNA ligase"/>
    <property type="match status" value="1"/>
</dbReference>
<dbReference type="Gene3D" id="1.10.10.350">
    <property type="match status" value="1"/>
</dbReference>
<dbReference type="Gene3D" id="3.40.50.620">
    <property type="entry name" value="HUPs"/>
    <property type="match status" value="1"/>
</dbReference>
<dbReference type="HAMAP" id="MF_00022">
    <property type="entry name" value="Glu_tRNA_synth_type1"/>
    <property type="match status" value="1"/>
</dbReference>
<dbReference type="InterPro" id="IPR045462">
    <property type="entry name" value="aa-tRNA-synth_I_cd-bd"/>
</dbReference>
<dbReference type="InterPro" id="IPR020751">
    <property type="entry name" value="aa-tRNA-synth_I_codon-bd_sub2"/>
</dbReference>
<dbReference type="InterPro" id="IPR001412">
    <property type="entry name" value="aa-tRNA-synth_I_CS"/>
</dbReference>
<dbReference type="InterPro" id="IPR008925">
    <property type="entry name" value="aa_tRNA-synth_I_cd-bd_sf"/>
</dbReference>
<dbReference type="InterPro" id="IPR004527">
    <property type="entry name" value="Glu-tRNA-ligase_bac/mito"/>
</dbReference>
<dbReference type="InterPro" id="IPR000924">
    <property type="entry name" value="Glu/Gln-tRNA-synth"/>
</dbReference>
<dbReference type="InterPro" id="IPR020058">
    <property type="entry name" value="Glu/Gln-tRNA-synth_Ib_cat-dom"/>
</dbReference>
<dbReference type="InterPro" id="IPR049940">
    <property type="entry name" value="GluQ/Sye"/>
</dbReference>
<dbReference type="InterPro" id="IPR033910">
    <property type="entry name" value="GluRS_core"/>
</dbReference>
<dbReference type="InterPro" id="IPR014729">
    <property type="entry name" value="Rossmann-like_a/b/a_fold"/>
</dbReference>
<dbReference type="NCBIfam" id="TIGR00464">
    <property type="entry name" value="gltX_bact"/>
    <property type="match status" value="1"/>
</dbReference>
<dbReference type="PANTHER" id="PTHR43311">
    <property type="entry name" value="GLUTAMATE--TRNA LIGASE"/>
    <property type="match status" value="1"/>
</dbReference>
<dbReference type="PANTHER" id="PTHR43311:SF2">
    <property type="entry name" value="GLUTAMATE--TRNA LIGASE, MITOCHONDRIAL-RELATED"/>
    <property type="match status" value="1"/>
</dbReference>
<dbReference type="Pfam" id="PF19269">
    <property type="entry name" value="Anticodon_2"/>
    <property type="match status" value="1"/>
</dbReference>
<dbReference type="Pfam" id="PF00749">
    <property type="entry name" value="tRNA-synt_1c"/>
    <property type="match status" value="1"/>
</dbReference>
<dbReference type="PRINTS" id="PR00987">
    <property type="entry name" value="TRNASYNTHGLU"/>
</dbReference>
<dbReference type="SUPFAM" id="SSF48163">
    <property type="entry name" value="An anticodon-binding domain of class I aminoacyl-tRNA synthetases"/>
    <property type="match status" value="1"/>
</dbReference>
<dbReference type="SUPFAM" id="SSF52374">
    <property type="entry name" value="Nucleotidylyl transferase"/>
    <property type="match status" value="1"/>
</dbReference>
<dbReference type="PROSITE" id="PS00178">
    <property type="entry name" value="AA_TRNA_LIGASE_I"/>
    <property type="match status" value="1"/>
</dbReference>
<evidence type="ECO:0000255" key="1">
    <source>
        <dbReference type="HAMAP-Rule" id="MF_00022"/>
    </source>
</evidence>
<accession>Q11PQ4</accession>
<name>SYE_CYTH3</name>
<comment type="function">
    <text evidence="1">Catalyzes the attachment of glutamate to tRNA(Glu) in a two-step reaction: glutamate is first activated by ATP to form Glu-AMP and then transferred to the acceptor end of tRNA(Glu).</text>
</comment>
<comment type="catalytic activity">
    <reaction evidence="1">
        <text>tRNA(Glu) + L-glutamate + ATP = L-glutamyl-tRNA(Glu) + AMP + diphosphate</text>
        <dbReference type="Rhea" id="RHEA:23540"/>
        <dbReference type="Rhea" id="RHEA-COMP:9663"/>
        <dbReference type="Rhea" id="RHEA-COMP:9680"/>
        <dbReference type="ChEBI" id="CHEBI:29985"/>
        <dbReference type="ChEBI" id="CHEBI:30616"/>
        <dbReference type="ChEBI" id="CHEBI:33019"/>
        <dbReference type="ChEBI" id="CHEBI:78442"/>
        <dbReference type="ChEBI" id="CHEBI:78520"/>
        <dbReference type="ChEBI" id="CHEBI:456215"/>
        <dbReference type="EC" id="6.1.1.17"/>
    </reaction>
</comment>
<comment type="subunit">
    <text evidence="1">Monomer.</text>
</comment>
<comment type="subcellular location">
    <subcellularLocation>
        <location evidence="1">Cytoplasm</location>
    </subcellularLocation>
</comment>
<comment type="similarity">
    <text evidence="1">Belongs to the class-I aminoacyl-tRNA synthetase family. Glutamate--tRNA ligase type 1 subfamily.</text>
</comment>
<keyword id="KW-0030">Aminoacyl-tRNA synthetase</keyword>
<keyword id="KW-0067">ATP-binding</keyword>
<keyword id="KW-0963">Cytoplasm</keyword>
<keyword id="KW-0436">Ligase</keyword>
<keyword id="KW-0547">Nucleotide-binding</keyword>
<keyword id="KW-0648">Protein biosynthesis</keyword>
<keyword id="KW-1185">Reference proteome</keyword>
<gene>
    <name evidence="1" type="primary">gltX</name>
    <name type="ordered locus">CHU_3373</name>
</gene>
<organism>
    <name type="scientific">Cytophaga hutchinsonii (strain ATCC 33406 / DSM 1761 / CIP 103989 / NBRC 15051 / NCIMB 9469 / D465)</name>
    <dbReference type="NCBI Taxonomy" id="269798"/>
    <lineage>
        <taxon>Bacteria</taxon>
        <taxon>Pseudomonadati</taxon>
        <taxon>Bacteroidota</taxon>
        <taxon>Cytophagia</taxon>
        <taxon>Cytophagales</taxon>
        <taxon>Cytophagaceae</taxon>
        <taxon>Cytophaga</taxon>
    </lineage>
</organism>
<protein>
    <recommendedName>
        <fullName evidence="1">Glutamate--tRNA ligase</fullName>
        <ecNumber evidence="1">6.1.1.17</ecNumber>
    </recommendedName>
    <alternativeName>
        <fullName evidence="1">Glutamyl-tRNA synthetase</fullName>
        <shortName evidence="1">GluRS</shortName>
    </alternativeName>
</protein>
<sequence>MSDTNKQVRVRFAPSPTGPLHIGGVRTALYNYLFARKMGGKMLLRIEDTDQNRFVPGAEAYIQEALAWVGIVIDEGAGVGGPHAPYKQSERKPMYREYAEKLIAEGNAYYAFDTSEELEAMKERLKAAKVASPSYNMVTRMQMNNSLTLPEDEVKRRLDAGDEYVIRLKVPRKEEIRLNDMIRGWVVVHSSTIDDKVLLKSDGMPTYHLANIVDDHLMEITHVIRGEEWLPSAPLHVLLYRFLGWEDTMPQFAHLPLLLKPDGNGKLSKRDADAGGFPIFPLDWKDPASGDTWIGFKQQGYLQEATTNFLAFLGWNPGTQQELFTMDELIEAFTVERIGKSGTKFDINKAKWYNQQYMRQLPDETLTRLLKEEADKHQAKYDAAKLPLIAQMLKERLTFAKDYWIEGQFFFEAPETFDEKVASTKWNAEAVTVISAYKEALAAYTGEFNAENVKHVLHEVLEKADVKIGKIMQALRLALTGAGAGPDLMQFIEIVGKEEAIKRMQFALITLSEKVNS</sequence>